<evidence type="ECO:0000255" key="1">
    <source>
        <dbReference type="HAMAP-Rule" id="MF_00514"/>
    </source>
</evidence>
<evidence type="ECO:0000305" key="2"/>
<gene>
    <name evidence="1" type="primary">rpmI</name>
    <name type="ordered locus">Bphyt_2754</name>
</gene>
<proteinExistence type="inferred from homology"/>
<organism>
    <name type="scientific">Paraburkholderia phytofirmans (strain DSM 17436 / LMG 22146 / PsJN)</name>
    <name type="common">Burkholderia phytofirmans</name>
    <dbReference type="NCBI Taxonomy" id="398527"/>
    <lineage>
        <taxon>Bacteria</taxon>
        <taxon>Pseudomonadati</taxon>
        <taxon>Pseudomonadota</taxon>
        <taxon>Betaproteobacteria</taxon>
        <taxon>Burkholderiales</taxon>
        <taxon>Burkholderiaceae</taxon>
        <taxon>Paraburkholderia</taxon>
    </lineage>
</organism>
<comment type="similarity">
    <text evidence="1">Belongs to the bacterial ribosomal protein bL35 family.</text>
</comment>
<sequence>MPKMKTKKSAAKRFVVRPGGTVKRGQAFKRHILTKKTTKNKRHLRGSTAVHDADMNSVRAMLPFA</sequence>
<reference key="1">
    <citation type="journal article" date="2011" name="J. Bacteriol.">
        <title>Complete genome sequence of the plant growth-promoting endophyte Burkholderia phytofirmans strain PsJN.</title>
        <authorList>
            <person name="Weilharter A."/>
            <person name="Mitter B."/>
            <person name="Shin M.V."/>
            <person name="Chain P.S."/>
            <person name="Nowak J."/>
            <person name="Sessitsch A."/>
        </authorList>
    </citation>
    <scope>NUCLEOTIDE SEQUENCE [LARGE SCALE GENOMIC DNA]</scope>
    <source>
        <strain>DSM 17436 / LMG 22146 / PsJN</strain>
    </source>
</reference>
<accession>B2SZG0</accession>
<name>RL35_PARPJ</name>
<keyword id="KW-0687">Ribonucleoprotein</keyword>
<keyword id="KW-0689">Ribosomal protein</keyword>
<protein>
    <recommendedName>
        <fullName evidence="1">Large ribosomal subunit protein bL35</fullName>
    </recommendedName>
    <alternativeName>
        <fullName evidence="2">50S ribosomal protein L35</fullName>
    </alternativeName>
</protein>
<feature type="chain" id="PRO_1000127321" description="Large ribosomal subunit protein bL35">
    <location>
        <begin position="1"/>
        <end position="65"/>
    </location>
</feature>
<dbReference type="EMBL" id="CP001052">
    <property type="protein sequence ID" value="ACD17148.1"/>
    <property type="molecule type" value="Genomic_DNA"/>
</dbReference>
<dbReference type="RefSeq" id="WP_012433738.1">
    <property type="nucleotide sequence ID" value="NC_010681.1"/>
</dbReference>
<dbReference type="SMR" id="B2SZG0"/>
<dbReference type="STRING" id="398527.Bphyt_2754"/>
<dbReference type="GeneID" id="97310576"/>
<dbReference type="KEGG" id="bpy:Bphyt_2754"/>
<dbReference type="eggNOG" id="COG0291">
    <property type="taxonomic scope" value="Bacteria"/>
</dbReference>
<dbReference type="HOGENOM" id="CLU_169643_1_0_4"/>
<dbReference type="OrthoDB" id="47476at2"/>
<dbReference type="Proteomes" id="UP000001739">
    <property type="component" value="Chromosome 1"/>
</dbReference>
<dbReference type="GO" id="GO:0022625">
    <property type="term" value="C:cytosolic large ribosomal subunit"/>
    <property type="evidence" value="ECO:0007669"/>
    <property type="project" value="TreeGrafter"/>
</dbReference>
<dbReference type="GO" id="GO:0003735">
    <property type="term" value="F:structural constituent of ribosome"/>
    <property type="evidence" value="ECO:0007669"/>
    <property type="project" value="InterPro"/>
</dbReference>
<dbReference type="GO" id="GO:0006412">
    <property type="term" value="P:translation"/>
    <property type="evidence" value="ECO:0007669"/>
    <property type="project" value="UniProtKB-UniRule"/>
</dbReference>
<dbReference type="FunFam" id="4.10.410.60:FF:000001">
    <property type="entry name" value="50S ribosomal protein L35"/>
    <property type="match status" value="1"/>
</dbReference>
<dbReference type="Gene3D" id="4.10.410.60">
    <property type="match status" value="1"/>
</dbReference>
<dbReference type="HAMAP" id="MF_00514">
    <property type="entry name" value="Ribosomal_bL35"/>
    <property type="match status" value="1"/>
</dbReference>
<dbReference type="InterPro" id="IPR001706">
    <property type="entry name" value="Ribosomal_bL35"/>
</dbReference>
<dbReference type="InterPro" id="IPR021137">
    <property type="entry name" value="Ribosomal_bL35-like"/>
</dbReference>
<dbReference type="InterPro" id="IPR018265">
    <property type="entry name" value="Ribosomal_bL35_CS"/>
</dbReference>
<dbReference type="InterPro" id="IPR037229">
    <property type="entry name" value="Ribosomal_bL35_sf"/>
</dbReference>
<dbReference type="NCBIfam" id="TIGR00001">
    <property type="entry name" value="rpmI_bact"/>
    <property type="match status" value="1"/>
</dbReference>
<dbReference type="PANTHER" id="PTHR33343">
    <property type="entry name" value="54S RIBOSOMAL PROTEIN BL35M"/>
    <property type="match status" value="1"/>
</dbReference>
<dbReference type="PANTHER" id="PTHR33343:SF1">
    <property type="entry name" value="LARGE RIBOSOMAL SUBUNIT PROTEIN BL35M"/>
    <property type="match status" value="1"/>
</dbReference>
<dbReference type="Pfam" id="PF01632">
    <property type="entry name" value="Ribosomal_L35p"/>
    <property type="match status" value="1"/>
</dbReference>
<dbReference type="PRINTS" id="PR00064">
    <property type="entry name" value="RIBOSOMALL35"/>
</dbReference>
<dbReference type="SUPFAM" id="SSF143034">
    <property type="entry name" value="L35p-like"/>
    <property type="match status" value="1"/>
</dbReference>
<dbReference type="PROSITE" id="PS00936">
    <property type="entry name" value="RIBOSOMAL_L35"/>
    <property type="match status" value="1"/>
</dbReference>